<comment type="function">
    <text evidence="10">Hydrolyzes sinigrin and, with lower efficiency, p-nitrophenyl beta-D-glucoside.</text>
</comment>
<comment type="catalytic activity">
    <reaction evidence="10">
        <text>a thioglucoside + H2O = a sugar + a thiol.</text>
        <dbReference type="EC" id="3.2.1.147"/>
    </reaction>
</comment>
<comment type="catalytic activity">
    <reaction evidence="10">
        <text>Hydrolysis of terminal, non-reducing beta-D-glucosyl residues with release of beta-D-glucose.</text>
        <dbReference type="EC" id="3.2.1.21"/>
    </reaction>
</comment>
<comment type="biophysicochemical properties">
    <kinetics>
        <KM evidence="10">547 uM for sinigrin (at pH 4.5)</KM>
        <KM evidence="10">80 mM for p-nitrophenyl beta-D-glucoside (at pH 4.5)</KM>
        <Vmax evidence="10">48.1 umol/min/mg enzyme with sinigrin as substrate (at pH 4.5)</Vmax>
        <Vmax evidence="10">17.0 umol/min/mg enzyme with p-nitrophenyl beta-D-glucoside as substrate (at pH 4.5)</Vmax>
    </kinetics>
</comment>
<comment type="tissue specificity">
    <text evidence="10">Specifically expressed in roots.</text>
</comment>
<comment type="miscellaneous">
    <text>It seems that the absence of a catalytic proton donor in plant myrosinases is not impairing the hydrolysis of glucosinolates.</text>
</comment>
<comment type="similarity">
    <text evidence="13">Belongs to the glycosyl hydrolase 1 family.</text>
</comment>
<comment type="sequence caution" evidence="13">
    <conflict type="erroneous gene model prediction">
        <sequence resource="EMBL-CDS" id="AAG52628"/>
    </conflict>
</comment>
<organism>
    <name type="scientific">Arabidopsis thaliana</name>
    <name type="common">Mouse-ear cress</name>
    <dbReference type="NCBI Taxonomy" id="3702"/>
    <lineage>
        <taxon>Eukaryota</taxon>
        <taxon>Viridiplantae</taxon>
        <taxon>Streptophyta</taxon>
        <taxon>Embryophyta</taxon>
        <taxon>Tracheophyta</taxon>
        <taxon>Spermatophyta</taxon>
        <taxon>Magnoliopsida</taxon>
        <taxon>eudicotyledons</taxon>
        <taxon>Gunneridae</taxon>
        <taxon>Pentapetalae</taxon>
        <taxon>rosids</taxon>
        <taxon>malvids</taxon>
        <taxon>Brassicales</taxon>
        <taxon>Brassicaceae</taxon>
        <taxon>Camelineae</taxon>
        <taxon>Arabidopsis</taxon>
    </lineage>
</organism>
<keyword id="KW-1015">Disulfide bond</keyword>
<keyword id="KW-0325">Glycoprotein</keyword>
<keyword id="KW-0326">Glycosidase</keyword>
<keyword id="KW-0378">Hydrolase</keyword>
<keyword id="KW-1185">Reference proteome</keyword>
<keyword id="KW-0732">Signal</keyword>
<accession>Q3ECS3</accession>
<accession>Q9C8J9</accession>
<proteinExistence type="evidence at protein level"/>
<sequence>MAIPKAHYSLAVLVLLFVVVSSSQKVCNPECKAKEPFHCDNTHAFNRSGFPKNFTFGAATSAYQIEGAAHRALNGWDYFTHRYPEKVPDRSSADLACDSYDLYKDDVKLLKRMNVQAYRLSIAWSRVLPKGRLTGGVDENGITYYNNLINELKANGIEPYVTIFHWDVPQTLEDEYGGFLSTRIVEDYTNYAELLFQRFGDRVKFWITLNQPLSLALKGYGNGSYPPGRCTGCELGGDSGVEPYTVAHNQLLAHAKTVSLYRKRYQKFQGGKIGTTLIGRWFVPLNEFSELDKAAAKRAFDFFVGWFLDPLVYGKYPTIMREMVGDRLPEFTPEESALVKGSLDFLGLNYYVSQYATDAPPPTQPNAITDARVTLGFYRNGSPIGVVASSFVYYPPGFRQILNYIKDNYKNPLTYITENGVADLDLGNVTLATALADNGRIQNHCSHLSCLKCAMKDGCNVAGYFAWSLMDNYEFGNGYTLRFGMNWVNFTNPADRKEKASGKWFSKFLAK</sequence>
<protein>
    <recommendedName>
        <fullName evidence="12">Myrosinase 5</fullName>
        <ecNumber evidence="10">3.2.1.147</ecNumber>
    </recommendedName>
    <alternativeName>
        <fullName evidence="11">Beta-glucosidase 35</fullName>
        <shortName evidence="11">AtBGLU35</shortName>
        <ecNumber evidence="10">3.2.1.21</ecNumber>
    </alternativeName>
    <alternativeName>
        <fullName evidence="12">Sinigrinase 5</fullName>
    </alternativeName>
    <alternativeName>
        <fullName evidence="12">Thioglucosidase 5</fullName>
    </alternativeName>
</protein>
<gene>
    <name evidence="12" type="primary">TGG5</name>
    <name evidence="11" type="synonym">BGLU35</name>
    <name evidence="14" type="ordered locus">At1g51470</name>
    <name evidence="15" type="ORF">F5D21.17</name>
</gene>
<reference key="1">
    <citation type="submission" date="2008-10" db="EMBL/GenBank/DDBJ databases">
        <title>Characterization of a new subfamily of thioglucoside glucohydrolases.</title>
        <authorList>
            <person name="Zhang J."/>
        </authorList>
    </citation>
    <scope>NUCLEOTIDE SEQUENCE [GENOMIC DNA]</scope>
    <source>
        <strain>cv. Columbia</strain>
    </source>
</reference>
<reference key="2">
    <citation type="journal article" date="2000" name="Nature">
        <title>Sequence and analysis of chromosome 1 of the plant Arabidopsis thaliana.</title>
        <authorList>
            <person name="Theologis A."/>
            <person name="Ecker J.R."/>
            <person name="Palm C.J."/>
            <person name="Federspiel N.A."/>
            <person name="Kaul S."/>
            <person name="White O."/>
            <person name="Alonso J."/>
            <person name="Altafi H."/>
            <person name="Araujo R."/>
            <person name="Bowman C.L."/>
            <person name="Brooks S.Y."/>
            <person name="Buehler E."/>
            <person name="Chan A."/>
            <person name="Chao Q."/>
            <person name="Chen H."/>
            <person name="Cheuk R.F."/>
            <person name="Chin C.W."/>
            <person name="Chung M.K."/>
            <person name="Conn L."/>
            <person name="Conway A.B."/>
            <person name="Conway A.R."/>
            <person name="Creasy T.H."/>
            <person name="Dewar K."/>
            <person name="Dunn P."/>
            <person name="Etgu P."/>
            <person name="Feldblyum T.V."/>
            <person name="Feng J.-D."/>
            <person name="Fong B."/>
            <person name="Fujii C.Y."/>
            <person name="Gill J.E."/>
            <person name="Goldsmith A.D."/>
            <person name="Haas B."/>
            <person name="Hansen N.F."/>
            <person name="Hughes B."/>
            <person name="Huizar L."/>
            <person name="Hunter J.L."/>
            <person name="Jenkins J."/>
            <person name="Johnson-Hopson C."/>
            <person name="Khan S."/>
            <person name="Khaykin E."/>
            <person name="Kim C.J."/>
            <person name="Koo H.L."/>
            <person name="Kremenetskaia I."/>
            <person name="Kurtz D.B."/>
            <person name="Kwan A."/>
            <person name="Lam B."/>
            <person name="Langin-Hooper S."/>
            <person name="Lee A."/>
            <person name="Lee J.M."/>
            <person name="Lenz C.A."/>
            <person name="Li J.H."/>
            <person name="Li Y.-P."/>
            <person name="Lin X."/>
            <person name="Liu S.X."/>
            <person name="Liu Z.A."/>
            <person name="Luros J.S."/>
            <person name="Maiti R."/>
            <person name="Marziali A."/>
            <person name="Militscher J."/>
            <person name="Miranda M."/>
            <person name="Nguyen M."/>
            <person name="Nierman W.C."/>
            <person name="Osborne B.I."/>
            <person name="Pai G."/>
            <person name="Peterson J."/>
            <person name="Pham P.K."/>
            <person name="Rizzo M."/>
            <person name="Rooney T."/>
            <person name="Rowley D."/>
            <person name="Sakano H."/>
            <person name="Salzberg S.L."/>
            <person name="Schwartz J.R."/>
            <person name="Shinn P."/>
            <person name="Southwick A.M."/>
            <person name="Sun H."/>
            <person name="Tallon L.J."/>
            <person name="Tambunga G."/>
            <person name="Toriumi M.J."/>
            <person name="Town C.D."/>
            <person name="Utterback T."/>
            <person name="Van Aken S."/>
            <person name="Vaysberg M."/>
            <person name="Vysotskaia V.S."/>
            <person name="Walker M."/>
            <person name="Wu D."/>
            <person name="Yu G."/>
            <person name="Fraser C.M."/>
            <person name="Venter J.C."/>
            <person name="Davis R.W."/>
        </authorList>
    </citation>
    <scope>NUCLEOTIDE SEQUENCE [LARGE SCALE GENOMIC DNA]</scope>
    <source>
        <strain>cv. Columbia</strain>
    </source>
</reference>
<reference key="3">
    <citation type="journal article" date="2017" name="Plant J.">
        <title>Araport11: a complete reannotation of the Arabidopsis thaliana reference genome.</title>
        <authorList>
            <person name="Cheng C.Y."/>
            <person name="Krishnakumar V."/>
            <person name="Chan A.P."/>
            <person name="Thibaud-Nissen F."/>
            <person name="Schobel S."/>
            <person name="Town C.D."/>
        </authorList>
    </citation>
    <scope>GENOME REANNOTATION</scope>
    <source>
        <strain>cv. Columbia</strain>
    </source>
</reference>
<reference key="4">
    <citation type="journal article" date="2004" name="Plant Mol. Biol.">
        <title>Functional genomic analysis of Arabidopsis thaliana glycoside hydrolase family 1.</title>
        <authorList>
            <person name="Xu Z."/>
            <person name="Escamilla-Trevino L.L."/>
            <person name="Zeng L."/>
            <person name="Lalgondar M."/>
            <person name="Bevan D.R."/>
            <person name="Winkel B.S.J."/>
            <person name="Mohamed A."/>
            <person name="Cheng C.-L."/>
            <person name="Shih M.-C."/>
            <person name="Poulton J.E."/>
            <person name="Esen A."/>
        </authorList>
    </citation>
    <scope>GENE FAMILY</scope>
    <scope>NOMENCLATURE</scope>
</reference>
<reference key="5">
    <citation type="journal article" date="2009" name="Phytochemistry">
        <title>Myrosinases from root and leaves of Arabidopsis thaliana have different catalytic properties.</title>
        <authorList>
            <person name="Andersson D."/>
            <person name="Chakrabarty R."/>
            <person name="Bejai S."/>
            <person name="Zhang J."/>
            <person name="Rask L."/>
            <person name="Meijer J."/>
        </authorList>
    </citation>
    <scope>FUNCTION</scope>
    <scope>CATALYTIC ACTIVITY</scope>
    <scope>BIOPHYSICOCHEMICAL PROPERTIES</scope>
    <scope>TISSUE SPECIFICITY</scope>
</reference>
<name>BGL35_ARATH</name>
<dbReference type="EC" id="3.2.1.147" evidence="10"/>
<dbReference type="EC" id="3.2.1.21" evidence="10"/>
<dbReference type="EMBL" id="FJ268796">
    <property type="protein sequence ID" value="ACO95140.1"/>
    <property type="molecule type" value="Genomic_DNA"/>
</dbReference>
<dbReference type="EMBL" id="AC024261">
    <property type="protein sequence ID" value="AAG52628.1"/>
    <property type="status" value="ALT_SEQ"/>
    <property type="molecule type" value="Genomic_DNA"/>
</dbReference>
<dbReference type="EMBL" id="CP002684">
    <property type="protein sequence ID" value="AEE32671.1"/>
    <property type="molecule type" value="Genomic_DNA"/>
</dbReference>
<dbReference type="PIR" id="A96553">
    <property type="entry name" value="A96553"/>
</dbReference>
<dbReference type="RefSeq" id="NP_175558.3">
    <property type="nucleotide sequence ID" value="NM_104025.4"/>
</dbReference>
<dbReference type="SMR" id="Q3ECS3"/>
<dbReference type="BioGRID" id="26797">
    <property type="interactions" value="1"/>
</dbReference>
<dbReference type="FunCoup" id="Q3ECS3">
    <property type="interactions" value="157"/>
</dbReference>
<dbReference type="STRING" id="3702.Q3ECS3"/>
<dbReference type="CAZy" id="GH1">
    <property type="family name" value="Glycoside Hydrolase Family 1"/>
</dbReference>
<dbReference type="GlyCosmos" id="Q3ECS3">
    <property type="glycosylation" value="5 sites, No reported glycans"/>
</dbReference>
<dbReference type="GlyGen" id="Q3ECS3">
    <property type="glycosylation" value="6 sites"/>
</dbReference>
<dbReference type="PaxDb" id="3702-AT1G51470.1"/>
<dbReference type="ProteomicsDB" id="240336"/>
<dbReference type="EnsemblPlants" id="AT1G51470.1">
    <property type="protein sequence ID" value="AT1G51470.1"/>
    <property type="gene ID" value="AT1G51470"/>
</dbReference>
<dbReference type="GeneID" id="841572"/>
<dbReference type="Gramene" id="AT1G51470.1">
    <property type="protein sequence ID" value="AT1G51470.1"/>
    <property type="gene ID" value="AT1G51470"/>
</dbReference>
<dbReference type="KEGG" id="ath:AT1G51470"/>
<dbReference type="Araport" id="AT1G51470"/>
<dbReference type="TAIR" id="AT1G51470">
    <property type="gene designation" value="BGLU35"/>
</dbReference>
<dbReference type="eggNOG" id="KOG0626">
    <property type="taxonomic scope" value="Eukaryota"/>
</dbReference>
<dbReference type="HOGENOM" id="CLU_001859_1_0_1"/>
<dbReference type="InParanoid" id="Q3ECS3"/>
<dbReference type="OMA" id="DICYAKF"/>
<dbReference type="PhylomeDB" id="Q3ECS3"/>
<dbReference type="BRENDA" id="3.2.1.147">
    <property type="organism ID" value="399"/>
</dbReference>
<dbReference type="SABIO-RK" id="Q3ECS3"/>
<dbReference type="PRO" id="PR:Q3ECS3"/>
<dbReference type="Proteomes" id="UP000006548">
    <property type="component" value="Chromosome 1"/>
</dbReference>
<dbReference type="ExpressionAtlas" id="Q3ECS3">
    <property type="expression patterns" value="baseline and differential"/>
</dbReference>
<dbReference type="GO" id="GO:0008422">
    <property type="term" value="F:beta-glucosidase activity"/>
    <property type="evidence" value="ECO:0000314"/>
    <property type="project" value="TAIR"/>
</dbReference>
<dbReference type="GO" id="GO:0019137">
    <property type="term" value="F:thioglucosidase activity"/>
    <property type="evidence" value="ECO:0000314"/>
    <property type="project" value="TAIR"/>
</dbReference>
<dbReference type="GO" id="GO:0005975">
    <property type="term" value="P:carbohydrate metabolic process"/>
    <property type="evidence" value="ECO:0007669"/>
    <property type="project" value="InterPro"/>
</dbReference>
<dbReference type="FunFam" id="3.20.20.80:FF:000041">
    <property type="entry name" value="Beta-glucosidase 7"/>
    <property type="match status" value="1"/>
</dbReference>
<dbReference type="Gene3D" id="3.20.20.80">
    <property type="entry name" value="Glycosidases"/>
    <property type="match status" value="1"/>
</dbReference>
<dbReference type="InterPro" id="IPR001360">
    <property type="entry name" value="Glyco_hydro_1"/>
</dbReference>
<dbReference type="InterPro" id="IPR018120">
    <property type="entry name" value="Glyco_hydro_1_AS"/>
</dbReference>
<dbReference type="InterPro" id="IPR033132">
    <property type="entry name" value="Glyco_hydro_1_N_CS"/>
</dbReference>
<dbReference type="InterPro" id="IPR017853">
    <property type="entry name" value="Glycoside_hydrolase_SF"/>
</dbReference>
<dbReference type="PANTHER" id="PTHR10353">
    <property type="entry name" value="GLYCOSYL HYDROLASE"/>
    <property type="match status" value="1"/>
</dbReference>
<dbReference type="PANTHER" id="PTHR10353:SF301">
    <property type="entry name" value="MYROSINASE 4-RELATED"/>
    <property type="match status" value="1"/>
</dbReference>
<dbReference type="Pfam" id="PF00232">
    <property type="entry name" value="Glyco_hydro_1"/>
    <property type="match status" value="1"/>
</dbReference>
<dbReference type="PRINTS" id="PR00131">
    <property type="entry name" value="GLHYDRLASE1"/>
</dbReference>
<dbReference type="SUPFAM" id="SSF51445">
    <property type="entry name" value="(Trans)glycosidases"/>
    <property type="match status" value="1"/>
</dbReference>
<dbReference type="PROSITE" id="PS00572">
    <property type="entry name" value="GLYCOSYL_HYDROL_F1_1"/>
    <property type="match status" value="1"/>
</dbReference>
<dbReference type="PROSITE" id="PS00653">
    <property type="entry name" value="GLYCOSYL_HYDROL_F1_2"/>
    <property type="match status" value="1"/>
</dbReference>
<feature type="signal peptide" evidence="7">
    <location>
        <begin position="1"/>
        <end position="23"/>
    </location>
</feature>
<feature type="chain" id="PRO_0000389597" description="Myrosinase 5">
    <location>
        <begin position="24"/>
        <end position="511"/>
    </location>
</feature>
<feature type="active site" description="Nucleophile" evidence="9">
    <location>
        <position position="418"/>
    </location>
</feature>
<feature type="binding site" evidence="3">
    <location>
        <position position="64"/>
    </location>
    <ligand>
        <name>a beta-D-glucoside</name>
        <dbReference type="ChEBI" id="CHEBI:22798"/>
    </ligand>
</feature>
<feature type="binding site" evidence="3">
    <location>
        <position position="165"/>
    </location>
    <ligand>
        <name>a beta-D-glucoside</name>
        <dbReference type="ChEBI" id="CHEBI:22798"/>
    </ligand>
</feature>
<feature type="binding site" evidence="4">
    <location>
        <begin position="210"/>
        <end position="211"/>
    </location>
    <ligand>
        <name>a beta-D-glucoside</name>
        <dbReference type="ChEBI" id="CHEBI:22798"/>
    </ligand>
</feature>
<feature type="binding site" evidence="3">
    <location>
        <position position="351"/>
    </location>
    <ligand>
        <name>a beta-D-glucoside</name>
        <dbReference type="ChEBI" id="CHEBI:22798"/>
    </ligand>
</feature>
<feature type="binding site" evidence="6">
    <location>
        <position position="418"/>
    </location>
    <ligand>
        <name>a beta-D-glucoside</name>
        <dbReference type="ChEBI" id="CHEBI:22798"/>
    </ligand>
</feature>
<feature type="binding site" evidence="3">
    <location>
        <position position="467"/>
    </location>
    <ligand>
        <name>a beta-D-glucoside</name>
        <dbReference type="ChEBI" id="CHEBI:22798"/>
    </ligand>
</feature>
<feature type="binding site" evidence="5">
    <location>
        <begin position="474"/>
        <end position="475"/>
    </location>
    <ligand>
        <name>a beta-D-glucoside</name>
        <dbReference type="ChEBI" id="CHEBI:22798"/>
    </ligand>
</feature>
<feature type="binding site" evidence="2">
    <location>
        <position position="483"/>
    </location>
    <ligand>
        <name>a beta-D-glucoside</name>
        <dbReference type="ChEBI" id="CHEBI:22798"/>
    </ligand>
</feature>
<feature type="glycosylation site" description="N-linked (GlcNAc...) asparagine" evidence="8">
    <location>
        <position position="46"/>
    </location>
</feature>
<feature type="glycosylation site" description="N-linked (GlcNAc...) asparagine" evidence="8">
    <location>
        <position position="53"/>
    </location>
</feature>
<feature type="glycosylation site" description="N-linked (GlcNAc...) asparagine" evidence="8">
    <location>
        <position position="222"/>
    </location>
</feature>
<feature type="glycosylation site" description="N-linked (GlcNAc...) asparagine" evidence="8">
    <location>
        <position position="428"/>
    </location>
</feature>
<feature type="glycosylation site" description="N-linked (GlcNAc...) asparagine" evidence="8">
    <location>
        <position position="489"/>
    </location>
</feature>
<feature type="disulfide bond" evidence="1">
    <location>
        <begin position="31"/>
        <end position="450"/>
    </location>
</feature>
<feature type="disulfide bond" evidence="1">
    <location>
        <begin position="39"/>
        <end position="445"/>
    </location>
</feature>
<feature type="disulfide bond" evidence="3">
    <location>
        <begin position="230"/>
        <end position="233"/>
    </location>
</feature>
<evidence type="ECO:0000250" key="1"/>
<evidence type="ECO:0000250" key="2">
    <source>
        <dbReference type="UniProtKB" id="Q1XH05"/>
    </source>
</evidence>
<evidence type="ECO:0000250" key="3">
    <source>
        <dbReference type="UniProtKB" id="Q7XSK0"/>
    </source>
</evidence>
<evidence type="ECO:0000250" key="4">
    <source>
        <dbReference type="UniProtKB" id="Q8GU20"/>
    </source>
</evidence>
<evidence type="ECO:0000250" key="5">
    <source>
        <dbReference type="UniProtKB" id="Q8L7J2"/>
    </source>
</evidence>
<evidence type="ECO:0000250" key="6">
    <source>
        <dbReference type="UniProtKB" id="Q9SPP9"/>
    </source>
</evidence>
<evidence type="ECO:0000255" key="7"/>
<evidence type="ECO:0000255" key="8">
    <source>
        <dbReference type="PROSITE-ProRule" id="PRU00498"/>
    </source>
</evidence>
<evidence type="ECO:0000255" key="9">
    <source>
        <dbReference type="PROSITE-ProRule" id="PRU10055"/>
    </source>
</evidence>
<evidence type="ECO:0000269" key="10">
    <source>
    </source>
</evidence>
<evidence type="ECO:0000303" key="11">
    <source>
    </source>
</evidence>
<evidence type="ECO:0000303" key="12">
    <source>
    </source>
</evidence>
<evidence type="ECO:0000305" key="13"/>
<evidence type="ECO:0000312" key="14">
    <source>
        <dbReference type="Araport" id="AT1G51470"/>
    </source>
</evidence>
<evidence type="ECO:0000312" key="15">
    <source>
        <dbReference type="EMBL" id="AAG52628.1"/>
    </source>
</evidence>